<sequence length="437" mass="49164">MLDKNKQIWFIGIKGTGMASLALLLHDLGYNVAGSDIEKYTFTEVPLEKVGIDIKSFNPDNIKSNEEQVIVKGNAFKEDNPEVKACLDKGVKWQSYPDTVEEIVQMHTSIGISGTHGKTSTTSLLAHVLGEVAPTSYLIGDGRGKGVDDSRFFVYEADEYRRHFLAYHPDYQIMTNIDFDHPDYFKDQDDYTSAFQSAADQTKKALFVWGDDKRLQSLKTDIPKYTYGFKDTDDFQAVDIKKTTTGSSFNVLAHGKDLGRFEIHLFGDHSILNATAVIAVAYTEKVPMDAIREGLLTFKGAKRRFSEKDFGDIAVIDDYAHHPTEMRATIQAARQKFPDKKLVVVFQPHTFSRTKKYQKDFEEILRDVDKAYITPIYASAREANGDITSEDLVKNIPGSEVIDLDNIADLTKNKNSVIVFMGAGDIPKYEDAFEKLL</sequence>
<proteinExistence type="inferred from homology"/>
<reference key="1">
    <citation type="journal article" date="2005" name="Proc. Natl. Acad. Sci. U.S.A.">
        <title>Complete genome sequence of the probiotic lactic acid bacterium Lactobacillus acidophilus NCFM.</title>
        <authorList>
            <person name="Altermann E."/>
            <person name="Russell W.M."/>
            <person name="Azcarate-Peril M.A."/>
            <person name="Barrangou R."/>
            <person name="Buck B.L."/>
            <person name="McAuliffe O."/>
            <person name="Souther N."/>
            <person name="Dobson A."/>
            <person name="Duong T."/>
            <person name="Callanan M."/>
            <person name="Lick S."/>
            <person name="Hamrick A."/>
            <person name="Cano R."/>
            <person name="Klaenhammer T.R."/>
        </authorList>
    </citation>
    <scope>NUCLEOTIDE SEQUENCE [LARGE SCALE GENOMIC DNA]</scope>
    <source>
        <strain>ATCC 700396 / NCK56 / N2 / NCFM</strain>
    </source>
</reference>
<dbReference type="EC" id="6.3.2.8" evidence="1"/>
<dbReference type="EMBL" id="CP000033">
    <property type="protein sequence ID" value="AAV43396.1"/>
    <property type="molecule type" value="Genomic_DNA"/>
</dbReference>
<dbReference type="RefSeq" id="WP_003548413.1">
    <property type="nucleotide sequence ID" value="NC_006814.3"/>
</dbReference>
<dbReference type="RefSeq" id="YP_194427.1">
    <property type="nucleotide sequence ID" value="NC_006814.3"/>
</dbReference>
<dbReference type="SMR" id="Q5FIS8"/>
<dbReference type="STRING" id="272621.LBA1579"/>
<dbReference type="GeneID" id="93289356"/>
<dbReference type="KEGG" id="lac:LBA1579"/>
<dbReference type="PATRIC" id="fig|272621.13.peg.1501"/>
<dbReference type="eggNOG" id="COG0773">
    <property type="taxonomic scope" value="Bacteria"/>
</dbReference>
<dbReference type="HOGENOM" id="CLU_028104_1_0_9"/>
<dbReference type="OrthoDB" id="9804126at2"/>
<dbReference type="BioCyc" id="LACI272621:G1G49-1543-MONOMER"/>
<dbReference type="UniPathway" id="UPA00219"/>
<dbReference type="Proteomes" id="UP000006381">
    <property type="component" value="Chromosome"/>
</dbReference>
<dbReference type="GO" id="GO:0005737">
    <property type="term" value="C:cytoplasm"/>
    <property type="evidence" value="ECO:0007669"/>
    <property type="project" value="UniProtKB-SubCell"/>
</dbReference>
<dbReference type="GO" id="GO:0005524">
    <property type="term" value="F:ATP binding"/>
    <property type="evidence" value="ECO:0007669"/>
    <property type="project" value="UniProtKB-UniRule"/>
</dbReference>
<dbReference type="GO" id="GO:0008763">
    <property type="term" value="F:UDP-N-acetylmuramate-L-alanine ligase activity"/>
    <property type="evidence" value="ECO:0007669"/>
    <property type="project" value="UniProtKB-UniRule"/>
</dbReference>
<dbReference type="GO" id="GO:0051301">
    <property type="term" value="P:cell division"/>
    <property type="evidence" value="ECO:0007669"/>
    <property type="project" value="UniProtKB-KW"/>
</dbReference>
<dbReference type="GO" id="GO:0071555">
    <property type="term" value="P:cell wall organization"/>
    <property type="evidence" value="ECO:0007669"/>
    <property type="project" value="UniProtKB-KW"/>
</dbReference>
<dbReference type="GO" id="GO:0009252">
    <property type="term" value="P:peptidoglycan biosynthetic process"/>
    <property type="evidence" value="ECO:0007669"/>
    <property type="project" value="UniProtKB-UniRule"/>
</dbReference>
<dbReference type="GO" id="GO:0008360">
    <property type="term" value="P:regulation of cell shape"/>
    <property type="evidence" value="ECO:0007669"/>
    <property type="project" value="UniProtKB-KW"/>
</dbReference>
<dbReference type="Gene3D" id="3.90.190.20">
    <property type="entry name" value="Mur ligase, C-terminal domain"/>
    <property type="match status" value="1"/>
</dbReference>
<dbReference type="Gene3D" id="3.40.1190.10">
    <property type="entry name" value="Mur-like, catalytic domain"/>
    <property type="match status" value="1"/>
</dbReference>
<dbReference type="Gene3D" id="3.40.50.720">
    <property type="entry name" value="NAD(P)-binding Rossmann-like Domain"/>
    <property type="match status" value="1"/>
</dbReference>
<dbReference type="HAMAP" id="MF_00046">
    <property type="entry name" value="MurC"/>
    <property type="match status" value="1"/>
</dbReference>
<dbReference type="InterPro" id="IPR036565">
    <property type="entry name" value="Mur-like_cat_sf"/>
</dbReference>
<dbReference type="InterPro" id="IPR004101">
    <property type="entry name" value="Mur_ligase_C"/>
</dbReference>
<dbReference type="InterPro" id="IPR036615">
    <property type="entry name" value="Mur_ligase_C_dom_sf"/>
</dbReference>
<dbReference type="InterPro" id="IPR013221">
    <property type="entry name" value="Mur_ligase_cen"/>
</dbReference>
<dbReference type="InterPro" id="IPR000713">
    <property type="entry name" value="Mur_ligase_N"/>
</dbReference>
<dbReference type="InterPro" id="IPR050061">
    <property type="entry name" value="MurCDEF_pg_biosynth"/>
</dbReference>
<dbReference type="InterPro" id="IPR005758">
    <property type="entry name" value="UDP-N-AcMur_Ala_ligase_MurC"/>
</dbReference>
<dbReference type="NCBIfam" id="TIGR01082">
    <property type="entry name" value="murC"/>
    <property type="match status" value="1"/>
</dbReference>
<dbReference type="PANTHER" id="PTHR43445:SF3">
    <property type="entry name" value="UDP-N-ACETYLMURAMATE--L-ALANINE LIGASE"/>
    <property type="match status" value="1"/>
</dbReference>
<dbReference type="PANTHER" id="PTHR43445">
    <property type="entry name" value="UDP-N-ACETYLMURAMATE--L-ALANINE LIGASE-RELATED"/>
    <property type="match status" value="1"/>
</dbReference>
<dbReference type="Pfam" id="PF01225">
    <property type="entry name" value="Mur_ligase"/>
    <property type="match status" value="1"/>
</dbReference>
<dbReference type="Pfam" id="PF02875">
    <property type="entry name" value="Mur_ligase_C"/>
    <property type="match status" value="1"/>
</dbReference>
<dbReference type="Pfam" id="PF08245">
    <property type="entry name" value="Mur_ligase_M"/>
    <property type="match status" value="1"/>
</dbReference>
<dbReference type="SUPFAM" id="SSF51984">
    <property type="entry name" value="MurCD N-terminal domain"/>
    <property type="match status" value="1"/>
</dbReference>
<dbReference type="SUPFAM" id="SSF53623">
    <property type="entry name" value="MurD-like peptide ligases, catalytic domain"/>
    <property type="match status" value="1"/>
</dbReference>
<dbReference type="SUPFAM" id="SSF53244">
    <property type="entry name" value="MurD-like peptide ligases, peptide-binding domain"/>
    <property type="match status" value="1"/>
</dbReference>
<comment type="function">
    <text evidence="1">Cell wall formation.</text>
</comment>
<comment type="catalytic activity">
    <reaction evidence="1">
        <text>UDP-N-acetyl-alpha-D-muramate + L-alanine + ATP = UDP-N-acetyl-alpha-D-muramoyl-L-alanine + ADP + phosphate + H(+)</text>
        <dbReference type="Rhea" id="RHEA:23372"/>
        <dbReference type="ChEBI" id="CHEBI:15378"/>
        <dbReference type="ChEBI" id="CHEBI:30616"/>
        <dbReference type="ChEBI" id="CHEBI:43474"/>
        <dbReference type="ChEBI" id="CHEBI:57972"/>
        <dbReference type="ChEBI" id="CHEBI:70757"/>
        <dbReference type="ChEBI" id="CHEBI:83898"/>
        <dbReference type="ChEBI" id="CHEBI:456216"/>
        <dbReference type="EC" id="6.3.2.8"/>
    </reaction>
</comment>
<comment type="pathway">
    <text evidence="1">Cell wall biogenesis; peptidoglycan biosynthesis.</text>
</comment>
<comment type="subcellular location">
    <subcellularLocation>
        <location evidence="1">Cytoplasm</location>
    </subcellularLocation>
</comment>
<comment type="similarity">
    <text evidence="1">Belongs to the MurCDEF family.</text>
</comment>
<feature type="chain" id="PRO_0000182104" description="UDP-N-acetylmuramate--L-alanine ligase">
    <location>
        <begin position="1"/>
        <end position="437"/>
    </location>
</feature>
<feature type="binding site" evidence="1">
    <location>
        <begin position="114"/>
        <end position="120"/>
    </location>
    <ligand>
        <name>ATP</name>
        <dbReference type="ChEBI" id="CHEBI:30616"/>
    </ligand>
</feature>
<organism>
    <name type="scientific">Lactobacillus acidophilus (strain ATCC 700396 / NCK56 / N2 / NCFM)</name>
    <dbReference type="NCBI Taxonomy" id="272621"/>
    <lineage>
        <taxon>Bacteria</taxon>
        <taxon>Bacillati</taxon>
        <taxon>Bacillota</taxon>
        <taxon>Bacilli</taxon>
        <taxon>Lactobacillales</taxon>
        <taxon>Lactobacillaceae</taxon>
        <taxon>Lactobacillus</taxon>
    </lineage>
</organism>
<name>MURC_LACAC</name>
<evidence type="ECO:0000255" key="1">
    <source>
        <dbReference type="HAMAP-Rule" id="MF_00046"/>
    </source>
</evidence>
<gene>
    <name evidence="1" type="primary">murC</name>
    <name type="ordered locus">LBA1579</name>
</gene>
<accession>Q5FIS8</accession>
<keyword id="KW-0067">ATP-binding</keyword>
<keyword id="KW-0131">Cell cycle</keyword>
<keyword id="KW-0132">Cell division</keyword>
<keyword id="KW-0133">Cell shape</keyword>
<keyword id="KW-0961">Cell wall biogenesis/degradation</keyword>
<keyword id="KW-0963">Cytoplasm</keyword>
<keyword id="KW-0436">Ligase</keyword>
<keyword id="KW-0547">Nucleotide-binding</keyword>
<keyword id="KW-0573">Peptidoglycan synthesis</keyword>
<keyword id="KW-1185">Reference proteome</keyword>
<protein>
    <recommendedName>
        <fullName evidence="1">UDP-N-acetylmuramate--L-alanine ligase</fullName>
        <ecNumber evidence="1">6.3.2.8</ecNumber>
    </recommendedName>
    <alternativeName>
        <fullName evidence="1">UDP-N-acetylmuramoyl-L-alanine synthetase</fullName>
    </alternativeName>
</protein>